<gene>
    <name evidence="4" type="primary">tasG</name>
</gene>
<reference key="1">
    <citation type="journal article" date="2015" name="Org. Lett.">
        <title>Biosynthesis of the tetramic acids Sch210971 and Sch210972.</title>
        <authorList>
            <person name="Kakule T.B."/>
            <person name="Zhang S."/>
            <person name="Zhan J."/>
            <person name="Schmidt E.W."/>
        </authorList>
    </citation>
    <scope>NUCLEOTIDE SEQUENCE [GENOMIC DNA]</scope>
    <scope>FUNCTION</scope>
    <scope>PATHWAY</scope>
</reference>
<proteinExistence type="inferred from homology"/>
<protein>
    <recommendedName>
        <fullName evidence="4">Aminotransferase tasG</fullName>
        <ecNumber evidence="6">2.6.1.-</ecNumber>
    </recommendedName>
    <alternativeName>
        <fullName evidence="4">Tetramic acid Sch210971/2 biosynthesis cluster protein G</fullName>
    </alternativeName>
</protein>
<feature type="chain" id="PRO_0000453348" description="Aminotransferase tasG">
    <location>
        <begin position="1"/>
        <end position="325"/>
    </location>
</feature>
<feature type="binding site" evidence="2">
    <location>
        <position position="35"/>
    </location>
    <ligand>
        <name>substrate</name>
    </ligand>
</feature>
<feature type="binding site" evidence="1">
    <location>
        <begin position="89"/>
        <end position="90"/>
    </location>
    <ligand>
        <name>pyridoxal 5'-phosphate</name>
        <dbReference type="ChEBI" id="CHEBI:597326"/>
    </ligand>
</feature>
<feature type="binding site" evidence="1">
    <location>
        <position position="143"/>
    </location>
    <ligand>
        <name>pyridoxal 5'-phosphate</name>
        <dbReference type="ChEBI" id="CHEBI:597326"/>
    </ligand>
</feature>
<feature type="binding site" evidence="1 2">
    <location>
        <position position="143"/>
    </location>
    <ligand>
        <name>substrate</name>
    </ligand>
</feature>
<feature type="binding site" evidence="1">
    <location>
        <position position="174"/>
    </location>
    <ligand>
        <name>pyridoxal 5'-phosphate</name>
        <dbReference type="ChEBI" id="CHEBI:597326"/>
    </ligand>
</feature>
<feature type="binding site" evidence="1">
    <location>
        <begin position="203"/>
        <end position="205"/>
    </location>
    <ligand>
        <name>pyridoxal 5'-phosphate</name>
        <dbReference type="ChEBI" id="CHEBI:597326"/>
    </ligand>
</feature>
<feature type="binding site" evidence="2">
    <location>
        <position position="214"/>
    </location>
    <ligand>
        <name>pyridoxal 5'-phosphate</name>
        <dbReference type="ChEBI" id="CHEBI:597326"/>
    </ligand>
</feature>
<feature type="modified residue" description="N6-(pyridoxal phosphate)lysine" evidence="1">
    <location>
        <position position="206"/>
    </location>
</feature>
<organism>
    <name type="scientific">Hapsidospora irregularis</name>
    <dbReference type="NCBI Taxonomy" id="95324"/>
    <lineage>
        <taxon>Eukaryota</taxon>
        <taxon>Fungi</taxon>
        <taxon>Dikarya</taxon>
        <taxon>Ascomycota</taxon>
        <taxon>Pezizomycotina</taxon>
        <taxon>Sordariomycetes</taxon>
        <taxon>Hypocreomycetidae</taxon>
        <taxon>Hypocreales</taxon>
        <taxon>Bionectriaceae</taxon>
        <taxon>Hapsidospora</taxon>
    </lineage>
</organism>
<accession>A0A0F7CUE9</accession>
<comment type="function">
    <text evidence="3">Aminotransferase; part of the gene cluster that mediates the biosynthesis of the tetramic acids Sch210971 and Sch210972, potential anti-HIV fungal natural product that contain a decalin core (PubMed:25885659). The PKS module of tasS together with the enoylreductase tasC catalyze the formation of the polyketide unit which is then conjugated to 4-hydroxyl-4-methyl glutamate (HMG) by the condensation domain of the tasS NRPS module (PubMed:25885659). One unique structural feature of Sch210971 and Sch210972 is the tetramic acid motif proposed to be derived from the non-proteinogenic amino acid HMG, by a Dieckmann-type condensation catalyzed by the reductase domain of tasS (PubMed:25885659). The aldolase tasA catalyzes the aldol condensation of 2 molecules of pyruvic acid to yield the intermediate 4-hydroxyl-4-methyl-2-oxoglutarate (HMOG), which can then be stereoselectively transaminated, may be by tasG, to form HMG (PubMed:25885659). The Diels-Alderase tas3 then uses the Dieckmann product of tasS as substrate and catalyzes the Diels-Alder cycloaddition to form the decalin ring of Sch210971 and Sch210972 (PubMed:25885659).</text>
</comment>
<comment type="cofactor">
    <cofactor evidence="2">
        <name>pyridoxal 5'-phosphate</name>
        <dbReference type="ChEBI" id="CHEBI:597326"/>
    </cofactor>
</comment>
<comment type="pathway">
    <text evidence="6">Secondary metabolite biosynthesis.</text>
</comment>
<comment type="subunit">
    <text evidence="2">Homodimer.</text>
</comment>
<comment type="similarity">
    <text evidence="5">Belongs to the class-I pyridoxal-phosphate-dependent aminotransferase family.</text>
</comment>
<evidence type="ECO:0000250" key="1">
    <source>
        <dbReference type="UniProtKB" id="O84395"/>
    </source>
</evidence>
<evidence type="ECO:0000250" key="2">
    <source>
        <dbReference type="UniProtKB" id="Q93ZN9"/>
    </source>
</evidence>
<evidence type="ECO:0000269" key="3">
    <source>
    </source>
</evidence>
<evidence type="ECO:0000303" key="4">
    <source>
    </source>
</evidence>
<evidence type="ECO:0000305" key="5"/>
<evidence type="ECO:0000305" key="6">
    <source>
    </source>
</evidence>
<name>TASG_HAPIR</name>
<sequence>MFFDSVTNGPEDVMYQVKAACDSDNDPSKIDLGVGTYRNEDGDYHELDVLKEIATVQTISGTGAIHIGAMFLARSATDVLPHVYVGTPTWGNYQPLLRLAGLEMRTYNHYLSQTGRVDFASVLSAIRTTPRGSTFILQGCCHNPTAADFSREQWDIVVAEMESHGHLPFFDIAYQGLGEGVDEDVYGVRLCADKGMEMVVCQSFAKNFGLYGERCGALHVVCTSDDVAARVKDQLRCLIRWEFSSSPAYGARLVNLVLSDARAEEQCLLPLSKTQCQELQNKFRIYAVPNGRITMSGLSQGNIDYAARAIDAVVRSGLEAREPTG</sequence>
<dbReference type="EC" id="2.6.1.-" evidence="6"/>
<dbReference type="EMBL" id="KP835202">
    <property type="protein sequence ID" value="AKG54862.1"/>
    <property type="molecule type" value="Genomic_DNA"/>
</dbReference>
<dbReference type="SMR" id="A0A0F7CUE9"/>
<dbReference type="GO" id="GO:0004069">
    <property type="term" value="F:L-aspartate:2-oxoglutarate aminotransferase activity"/>
    <property type="evidence" value="ECO:0007669"/>
    <property type="project" value="UniProtKB-EC"/>
</dbReference>
<dbReference type="GO" id="GO:0030170">
    <property type="term" value="F:pyridoxal phosphate binding"/>
    <property type="evidence" value="ECO:0007669"/>
    <property type="project" value="InterPro"/>
</dbReference>
<dbReference type="GO" id="GO:0006520">
    <property type="term" value="P:amino acid metabolic process"/>
    <property type="evidence" value="ECO:0007669"/>
    <property type="project" value="InterPro"/>
</dbReference>
<dbReference type="GO" id="GO:0009058">
    <property type="term" value="P:biosynthetic process"/>
    <property type="evidence" value="ECO:0007669"/>
    <property type="project" value="InterPro"/>
</dbReference>
<dbReference type="CDD" id="cd00609">
    <property type="entry name" value="AAT_like"/>
    <property type="match status" value="1"/>
</dbReference>
<dbReference type="Gene3D" id="3.90.1150.10">
    <property type="entry name" value="Aspartate Aminotransferase, domain 1"/>
    <property type="match status" value="1"/>
</dbReference>
<dbReference type="Gene3D" id="3.40.640.10">
    <property type="entry name" value="Type I PLP-dependent aspartate aminotransferase-like (Major domain)"/>
    <property type="match status" value="1"/>
</dbReference>
<dbReference type="InterPro" id="IPR004839">
    <property type="entry name" value="Aminotransferase_I/II_large"/>
</dbReference>
<dbReference type="InterPro" id="IPR000796">
    <property type="entry name" value="Asp_trans"/>
</dbReference>
<dbReference type="InterPro" id="IPR015424">
    <property type="entry name" value="PyrdxlP-dep_Trfase"/>
</dbReference>
<dbReference type="InterPro" id="IPR015421">
    <property type="entry name" value="PyrdxlP-dep_Trfase_major"/>
</dbReference>
<dbReference type="InterPro" id="IPR015422">
    <property type="entry name" value="PyrdxlP-dep_Trfase_small"/>
</dbReference>
<dbReference type="PANTHER" id="PTHR11879">
    <property type="entry name" value="ASPARTATE AMINOTRANSFERASE"/>
    <property type="match status" value="1"/>
</dbReference>
<dbReference type="PANTHER" id="PTHR11879:SF55">
    <property type="entry name" value="GLUTAMATE OXALOACETATE TRANSAMINASE 1, ISOFORM B"/>
    <property type="match status" value="1"/>
</dbReference>
<dbReference type="Pfam" id="PF00155">
    <property type="entry name" value="Aminotran_1_2"/>
    <property type="match status" value="1"/>
</dbReference>
<dbReference type="PRINTS" id="PR00799">
    <property type="entry name" value="TRANSAMINASE"/>
</dbReference>
<dbReference type="SUPFAM" id="SSF53383">
    <property type="entry name" value="PLP-dependent transferases"/>
    <property type="match status" value="1"/>
</dbReference>
<keyword id="KW-0032">Aminotransferase</keyword>
<keyword id="KW-0663">Pyridoxal phosphate</keyword>
<keyword id="KW-0808">Transferase</keyword>